<name>Y2103_GEOKA</name>
<proteinExistence type="inferred from homology"/>
<protein>
    <recommendedName>
        <fullName evidence="1">Putative hydro-lyase GK2103</fullName>
        <ecNumber evidence="1">4.2.1.-</ecNumber>
    </recommendedName>
</protein>
<gene>
    <name type="ordered locus">GK2103</name>
</gene>
<keyword id="KW-0456">Lyase</keyword>
<keyword id="KW-1185">Reference proteome</keyword>
<organism>
    <name type="scientific">Geobacillus kaustophilus (strain HTA426)</name>
    <dbReference type="NCBI Taxonomy" id="235909"/>
    <lineage>
        <taxon>Bacteria</taxon>
        <taxon>Bacillati</taxon>
        <taxon>Bacillota</taxon>
        <taxon>Bacilli</taxon>
        <taxon>Bacillales</taxon>
        <taxon>Anoxybacillaceae</taxon>
        <taxon>Geobacillus</taxon>
        <taxon>Geobacillus thermoleovorans group</taxon>
    </lineage>
</organism>
<dbReference type="EC" id="4.2.1.-" evidence="1"/>
<dbReference type="EMBL" id="BA000043">
    <property type="protein sequence ID" value="BAD76388.1"/>
    <property type="molecule type" value="Genomic_DNA"/>
</dbReference>
<dbReference type="RefSeq" id="WP_011231588.1">
    <property type="nucleotide sequence ID" value="NC_006510.1"/>
</dbReference>
<dbReference type="SMR" id="Q5KY48"/>
<dbReference type="STRING" id="235909.GK2103"/>
<dbReference type="KEGG" id="gka:GK2103"/>
<dbReference type="eggNOG" id="COG4336">
    <property type="taxonomic scope" value="Bacteria"/>
</dbReference>
<dbReference type="HOGENOM" id="CLU_059759_0_0_9"/>
<dbReference type="Proteomes" id="UP000001172">
    <property type="component" value="Chromosome"/>
</dbReference>
<dbReference type="GO" id="GO:0016829">
    <property type="term" value="F:lyase activity"/>
    <property type="evidence" value="ECO:0007669"/>
    <property type="project" value="UniProtKB-KW"/>
</dbReference>
<dbReference type="FunFam" id="3.30.2040.10:FF:000001">
    <property type="entry name" value="D-glutamate cyclase, mitochondrial"/>
    <property type="match status" value="1"/>
</dbReference>
<dbReference type="Gene3D" id="3.40.1640.10">
    <property type="entry name" value="PSTPO5379-like"/>
    <property type="match status" value="1"/>
</dbReference>
<dbReference type="Gene3D" id="3.30.2040.10">
    <property type="entry name" value="PSTPO5379-like domain"/>
    <property type="match status" value="1"/>
</dbReference>
<dbReference type="HAMAP" id="MF_01830">
    <property type="entry name" value="Hydro_lyase"/>
    <property type="match status" value="1"/>
</dbReference>
<dbReference type="InterPro" id="IPR009906">
    <property type="entry name" value="D-Glu_cyclase"/>
</dbReference>
<dbReference type="InterPro" id="IPR038021">
    <property type="entry name" value="Putative_hydro-lyase"/>
</dbReference>
<dbReference type="InterPro" id="IPR016938">
    <property type="entry name" value="UPF0317"/>
</dbReference>
<dbReference type="NCBIfam" id="NF003969">
    <property type="entry name" value="PRK05463.1"/>
    <property type="match status" value="1"/>
</dbReference>
<dbReference type="PANTHER" id="PTHR32022">
    <property type="entry name" value="D-GLUTAMATE CYCLASE, MITOCHONDRIAL"/>
    <property type="match status" value="1"/>
</dbReference>
<dbReference type="PANTHER" id="PTHR32022:SF10">
    <property type="entry name" value="D-GLUTAMATE CYCLASE, MITOCHONDRIAL"/>
    <property type="match status" value="1"/>
</dbReference>
<dbReference type="Pfam" id="PF07286">
    <property type="entry name" value="D-Glu_cyclase"/>
    <property type="match status" value="1"/>
</dbReference>
<dbReference type="PIRSF" id="PIRSF029755">
    <property type="entry name" value="UCP029755"/>
    <property type="match status" value="1"/>
</dbReference>
<dbReference type="SUPFAM" id="SSF160920">
    <property type="entry name" value="PSTPO5379-like"/>
    <property type="match status" value="1"/>
</dbReference>
<evidence type="ECO:0000255" key="1">
    <source>
        <dbReference type="HAMAP-Rule" id="MF_01830"/>
    </source>
</evidence>
<comment type="similarity">
    <text evidence="1">Belongs to the D-glutamate cyclase family.</text>
</comment>
<accession>Q5KY48</accession>
<feature type="chain" id="PRO_0000217167" description="Putative hydro-lyase GK2103">
    <location>
        <begin position="1"/>
        <end position="263"/>
    </location>
</feature>
<reference key="1">
    <citation type="journal article" date="2004" name="Nucleic Acids Res.">
        <title>Thermoadaptation trait revealed by the genome sequence of thermophilic Geobacillus kaustophilus.</title>
        <authorList>
            <person name="Takami H."/>
            <person name="Takaki Y."/>
            <person name="Chee G.-J."/>
            <person name="Nishi S."/>
            <person name="Shimamura S."/>
            <person name="Suzuki H."/>
            <person name="Matsui S."/>
            <person name="Uchiyama I."/>
        </authorList>
    </citation>
    <scope>NUCLEOTIDE SEQUENCE [LARGE SCALE GENOMIC DNA]</scope>
    <source>
        <strain>HTA426</strain>
    </source>
</reference>
<sequence length="263" mass="29359">MTFAAPMSSKEARQMIRNNEWVKPTAGVANGYTQANLVVLPKELAFEFLLFCQRNPKPCPVLDVTEPGSWEPSMVAPGADLRVDLPKYRVYRNGELTEERTDIIDLWDKDMVGFLLGCSFTFEHALVNNGIPVRHIQENCNVPMYKTNIPCVKAGRFEGPMVVSMRPIPHKDVVRAVQVTSRFPSVHGAPIHIGDPKLIGIHDIYKPDFGDPVTIREGETPVFWACGVTPQAVAMEVKPDIMITHAPGHMFITDLRDEQLGVL</sequence>